<evidence type="ECO:0000255" key="1">
    <source>
        <dbReference type="HAMAP-Rule" id="MF_01690"/>
    </source>
</evidence>
<dbReference type="EC" id="3.5.1.18" evidence="1"/>
<dbReference type="EMBL" id="CP000266">
    <property type="protein sequence ID" value="ABF04619.1"/>
    <property type="molecule type" value="Genomic_DNA"/>
</dbReference>
<dbReference type="RefSeq" id="WP_001277831.1">
    <property type="nucleotide sequence ID" value="NC_008258.1"/>
</dbReference>
<dbReference type="SMR" id="Q0T246"/>
<dbReference type="MEROPS" id="M20.010"/>
<dbReference type="KEGG" id="sfv:SFV_2516"/>
<dbReference type="HOGENOM" id="CLU_021802_4_0_6"/>
<dbReference type="UniPathway" id="UPA00034">
    <property type="reaction ID" value="UER00021"/>
</dbReference>
<dbReference type="Proteomes" id="UP000000659">
    <property type="component" value="Chromosome"/>
</dbReference>
<dbReference type="GO" id="GO:0008777">
    <property type="term" value="F:acetylornithine deacetylase activity"/>
    <property type="evidence" value="ECO:0007669"/>
    <property type="project" value="TreeGrafter"/>
</dbReference>
<dbReference type="GO" id="GO:0050897">
    <property type="term" value="F:cobalt ion binding"/>
    <property type="evidence" value="ECO:0007669"/>
    <property type="project" value="UniProtKB-UniRule"/>
</dbReference>
<dbReference type="GO" id="GO:0009014">
    <property type="term" value="F:succinyl-diaminopimelate desuccinylase activity"/>
    <property type="evidence" value="ECO:0007669"/>
    <property type="project" value="UniProtKB-UniRule"/>
</dbReference>
<dbReference type="GO" id="GO:0008270">
    <property type="term" value="F:zinc ion binding"/>
    <property type="evidence" value="ECO:0007669"/>
    <property type="project" value="UniProtKB-UniRule"/>
</dbReference>
<dbReference type="GO" id="GO:0019877">
    <property type="term" value="P:diaminopimelate biosynthetic process"/>
    <property type="evidence" value="ECO:0007669"/>
    <property type="project" value="UniProtKB-UniRule"/>
</dbReference>
<dbReference type="GO" id="GO:0006526">
    <property type="term" value="P:L-arginine biosynthetic process"/>
    <property type="evidence" value="ECO:0007669"/>
    <property type="project" value="TreeGrafter"/>
</dbReference>
<dbReference type="GO" id="GO:0009089">
    <property type="term" value="P:lysine biosynthetic process via diaminopimelate"/>
    <property type="evidence" value="ECO:0007669"/>
    <property type="project" value="UniProtKB-UniRule"/>
</dbReference>
<dbReference type="CDD" id="cd03891">
    <property type="entry name" value="M20_DapE_proteobac"/>
    <property type="match status" value="1"/>
</dbReference>
<dbReference type="FunFam" id="3.30.70.360:FF:000011">
    <property type="entry name" value="Succinyl-diaminopimelate desuccinylase"/>
    <property type="match status" value="1"/>
</dbReference>
<dbReference type="FunFam" id="3.40.630.10:FF:000005">
    <property type="entry name" value="Succinyl-diaminopimelate desuccinylase"/>
    <property type="match status" value="1"/>
</dbReference>
<dbReference type="FunFam" id="3.40.630.10:FF:000010">
    <property type="entry name" value="Succinyl-diaminopimelate desuccinylase"/>
    <property type="match status" value="1"/>
</dbReference>
<dbReference type="Gene3D" id="3.40.630.10">
    <property type="entry name" value="Zn peptidases"/>
    <property type="match status" value="2"/>
</dbReference>
<dbReference type="HAMAP" id="MF_01690">
    <property type="entry name" value="DapE"/>
    <property type="match status" value="1"/>
</dbReference>
<dbReference type="InterPro" id="IPR001261">
    <property type="entry name" value="ArgE/DapE_CS"/>
</dbReference>
<dbReference type="InterPro" id="IPR036264">
    <property type="entry name" value="Bact_exopeptidase_dim_dom"/>
</dbReference>
<dbReference type="InterPro" id="IPR005941">
    <property type="entry name" value="DapE_proteobac"/>
</dbReference>
<dbReference type="InterPro" id="IPR002933">
    <property type="entry name" value="Peptidase_M20"/>
</dbReference>
<dbReference type="InterPro" id="IPR011650">
    <property type="entry name" value="Peptidase_M20_dimer"/>
</dbReference>
<dbReference type="InterPro" id="IPR050072">
    <property type="entry name" value="Peptidase_M20A"/>
</dbReference>
<dbReference type="NCBIfam" id="TIGR01246">
    <property type="entry name" value="dapE_proteo"/>
    <property type="match status" value="1"/>
</dbReference>
<dbReference type="NCBIfam" id="NF009557">
    <property type="entry name" value="PRK13009.1"/>
    <property type="match status" value="1"/>
</dbReference>
<dbReference type="PANTHER" id="PTHR43808">
    <property type="entry name" value="ACETYLORNITHINE DEACETYLASE"/>
    <property type="match status" value="1"/>
</dbReference>
<dbReference type="PANTHER" id="PTHR43808:SF31">
    <property type="entry name" value="N-ACETYL-L-CITRULLINE DEACETYLASE"/>
    <property type="match status" value="1"/>
</dbReference>
<dbReference type="Pfam" id="PF07687">
    <property type="entry name" value="M20_dimer"/>
    <property type="match status" value="1"/>
</dbReference>
<dbReference type="Pfam" id="PF01546">
    <property type="entry name" value="Peptidase_M20"/>
    <property type="match status" value="1"/>
</dbReference>
<dbReference type="SUPFAM" id="SSF55031">
    <property type="entry name" value="Bacterial exopeptidase dimerisation domain"/>
    <property type="match status" value="1"/>
</dbReference>
<dbReference type="SUPFAM" id="SSF53187">
    <property type="entry name" value="Zn-dependent exopeptidases"/>
    <property type="match status" value="1"/>
</dbReference>
<dbReference type="PROSITE" id="PS00758">
    <property type="entry name" value="ARGE_DAPE_CPG2_1"/>
    <property type="match status" value="1"/>
</dbReference>
<dbReference type="PROSITE" id="PS00759">
    <property type="entry name" value="ARGE_DAPE_CPG2_2"/>
    <property type="match status" value="1"/>
</dbReference>
<gene>
    <name evidence="1" type="primary">dapE</name>
    <name type="ordered locus">SFV_2516</name>
</gene>
<proteinExistence type="inferred from homology"/>
<accession>Q0T246</accession>
<reference key="1">
    <citation type="journal article" date="2006" name="BMC Genomics">
        <title>Complete genome sequence of Shigella flexneri 5b and comparison with Shigella flexneri 2a.</title>
        <authorList>
            <person name="Nie H."/>
            <person name="Yang F."/>
            <person name="Zhang X."/>
            <person name="Yang J."/>
            <person name="Chen L."/>
            <person name="Wang J."/>
            <person name="Xiong Z."/>
            <person name="Peng J."/>
            <person name="Sun L."/>
            <person name="Dong J."/>
            <person name="Xue Y."/>
            <person name="Xu X."/>
            <person name="Chen S."/>
            <person name="Yao Z."/>
            <person name="Shen Y."/>
            <person name="Jin Q."/>
        </authorList>
    </citation>
    <scope>NUCLEOTIDE SEQUENCE [LARGE SCALE GENOMIC DNA]</scope>
    <source>
        <strain>8401</strain>
    </source>
</reference>
<name>DAPE_SHIF8</name>
<comment type="function">
    <text evidence="1">Catalyzes the hydrolysis of N-succinyl-L,L-diaminopimelic acid (SDAP), forming succinate and LL-2,6-diaminopimelate (DAP), an intermediate involved in the bacterial biosynthesis of lysine and meso-diaminopimelic acid, an essential component of bacterial cell walls.</text>
</comment>
<comment type="catalytic activity">
    <reaction evidence="1">
        <text>N-succinyl-(2S,6S)-2,6-diaminopimelate + H2O = (2S,6S)-2,6-diaminopimelate + succinate</text>
        <dbReference type="Rhea" id="RHEA:22608"/>
        <dbReference type="ChEBI" id="CHEBI:15377"/>
        <dbReference type="ChEBI" id="CHEBI:30031"/>
        <dbReference type="ChEBI" id="CHEBI:57609"/>
        <dbReference type="ChEBI" id="CHEBI:58087"/>
        <dbReference type="EC" id="3.5.1.18"/>
    </reaction>
</comment>
<comment type="cofactor">
    <cofactor evidence="1">
        <name>Zn(2+)</name>
        <dbReference type="ChEBI" id="CHEBI:29105"/>
    </cofactor>
    <cofactor evidence="1">
        <name>Co(2+)</name>
        <dbReference type="ChEBI" id="CHEBI:48828"/>
    </cofactor>
    <text evidence="1">Binds 2 Zn(2+) or Co(2+) ions per subunit.</text>
</comment>
<comment type="pathway">
    <text evidence="1">Amino-acid biosynthesis; L-lysine biosynthesis via DAP pathway; LL-2,6-diaminopimelate from (S)-tetrahydrodipicolinate (succinylase route): step 3/3.</text>
</comment>
<comment type="subunit">
    <text evidence="1">Homodimer.</text>
</comment>
<comment type="similarity">
    <text evidence="1">Belongs to the peptidase M20A family. DapE subfamily.</text>
</comment>
<keyword id="KW-0028">Amino-acid biosynthesis</keyword>
<keyword id="KW-0170">Cobalt</keyword>
<keyword id="KW-0220">Diaminopimelate biosynthesis</keyword>
<keyword id="KW-0378">Hydrolase</keyword>
<keyword id="KW-0457">Lysine biosynthesis</keyword>
<keyword id="KW-0479">Metal-binding</keyword>
<keyword id="KW-0862">Zinc</keyword>
<protein>
    <recommendedName>
        <fullName evidence="1">Succinyl-diaminopimelate desuccinylase</fullName>
        <shortName evidence="1">SDAP desuccinylase</shortName>
        <ecNumber evidence="1">3.5.1.18</ecNumber>
    </recommendedName>
    <alternativeName>
        <fullName evidence="1">N-succinyl-LL-2,6-diaminoheptanedioate amidohydrolase</fullName>
    </alternativeName>
</protein>
<feature type="chain" id="PRO_0000375748" description="Succinyl-diaminopimelate desuccinylase">
    <location>
        <begin position="1"/>
        <end position="375"/>
    </location>
</feature>
<feature type="active site" evidence="1">
    <location>
        <position position="68"/>
    </location>
</feature>
<feature type="active site" description="Proton acceptor" evidence="1">
    <location>
        <position position="133"/>
    </location>
</feature>
<feature type="binding site" evidence="1">
    <location>
        <position position="66"/>
    </location>
    <ligand>
        <name>Zn(2+)</name>
        <dbReference type="ChEBI" id="CHEBI:29105"/>
        <label>1</label>
    </ligand>
</feature>
<feature type="binding site" evidence="1">
    <location>
        <position position="99"/>
    </location>
    <ligand>
        <name>Zn(2+)</name>
        <dbReference type="ChEBI" id="CHEBI:29105"/>
        <label>1</label>
    </ligand>
</feature>
<feature type="binding site" evidence="1">
    <location>
        <position position="99"/>
    </location>
    <ligand>
        <name>Zn(2+)</name>
        <dbReference type="ChEBI" id="CHEBI:29105"/>
        <label>2</label>
    </ligand>
</feature>
<feature type="binding site" evidence="1">
    <location>
        <position position="134"/>
    </location>
    <ligand>
        <name>Zn(2+)</name>
        <dbReference type="ChEBI" id="CHEBI:29105"/>
        <label>2</label>
    </ligand>
</feature>
<feature type="binding site" evidence="1">
    <location>
        <position position="162"/>
    </location>
    <ligand>
        <name>Zn(2+)</name>
        <dbReference type="ChEBI" id="CHEBI:29105"/>
        <label>1</label>
    </ligand>
</feature>
<feature type="binding site" evidence="1">
    <location>
        <position position="348"/>
    </location>
    <ligand>
        <name>Zn(2+)</name>
        <dbReference type="ChEBI" id="CHEBI:29105"/>
        <label>2</label>
    </ligand>
</feature>
<organism>
    <name type="scientific">Shigella flexneri serotype 5b (strain 8401)</name>
    <dbReference type="NCBI Taxonomy" id="373384"/>
    <lineage>
        <taxon>Bacteria</taxon>
        <taxon>Pseudomonadati</taxon>
        <taxon>Pseudomonadota</taxon>
        <taxon>Gammaproteobacteria</taxon>
        <taxon>Enterobacterales</taxon>
        <taxon>Enterobacteriaceae</taxon>
        <taxon>Shigella</taxon>
    </lineage>
</organism>
<sequence>MSCPVIELTQQLIRRPSLSPYDAGCQALLIERLQAIGFTVERMDFADTQNFWAWRGQGETLAFAGHTDVVPPGDADRWINPPFEPTIRDGMLFGRGAADMKGSLAAMVVAAERFVAQHPNHTGRLAFLITSDEEASAHNGTVKVVEALMARNERLDYCLVGEPSSIEVVGDVVKNGRRGSLTCNLTIHGVQGHVAYPHLADNPVHRAAPFLNELVAIEWDQGNEFFPATSMQIANIQAGTGSNNVIPGELFVQFNFRFSTELTDEMIKAQVLALLEKHQLRYTVDWWLSGQPFLTARGKLVDAVVNAVEHYNEIKPQLLTTGGTSDGRFIARMGAQVVELGPVNATIHKINECVNAADLQLLARMYQRIMEQLVA</sequence>